<evidence type="ECO:0000255" key="1">
    <source>
        <dbReference type="HAMAP-Rule" id="MF_01326"/>
    </source>
</evidence>
<evidence type="ECO:0000305" key="2"/>
<dbReference type="EMBL" id="CP001251">
    <property type="protein sequence ID" value="ACK42272.1"/>
    <property type="molecule type" value="Genomic_DNA"/>
</dbReference>
<dbReference type="RefSeq" id="WP_012583356.1">
    <property type="nucleotide sequence ID" value="NC_011661.1"/>
</dbReference>
<dbReference type="RefSeq" id="YP_002352886.1">
    <property type="nucleotide sequence ID" value="NC_011661.1"/>
</dbReference>
<dbReference type="SMR" id="B8E1E4"/>
<dbReference type="FunCoup" id="B8E1E4">
    <property type="interactions" value="397"/>
</dbReference>
<dbReference type="STRING" id="515635.Dtur_0992"/>
<dbReference type="EnsemblBacteria" id="ACK42272">
    <property type="protein sequence ID" value="ACK42272"/>
    <property type="gene ID" value="Dtur_0992"/>
</dbReference>
<dbReference type="KEGG" id="dtu:Dtur_0992"/>
<dbReference type="PATRIC" id="fig|515635.4.peg.1029"/>
<dbReference type="eggNOG" id="COG0198">
    <property type="taxonomic scope" value="Bacteria"/>
</dbReference>
<dbReference type="HOGENOM" id="CLU_093315_2_0_0"/>
<dbReference type="InParanoid" id="B8E1E4"/>
<dbReference type="OrthoDB" id="9807419at2"/>
<dbReference type="Proteomes" id="UP000007719">
    <property type="component" value="Chromosome"/>
</dbReference>
<dbReference type="GO" id="GO:0022625">
    <property type="term" value="C:cytosolic large ribosomal subunit"/>
    <property type="evidence" value="ECO:0000318"/>
    <property type="project" value="GO_Central"/>
</dbReference>
<dbReference type="GO" id="GO:0019843">
    <property type="term" value="F:rRNA binding"/>
    <property type="evidence" value="ECO:0007669"/>
    <property type="project" value="UniProtKB-UniRule"/>
</dbReference>
<dbReference type="GO" id="GO:0003735">
    <property type="term" value="F:structural constituent of ribosome"/>
    <property type="evidence" value="ECO:0007669"/>
    <property type="project" value="InterPro"/>
</dbReference>
<dbReference type="GO" id="GO:0006412">
    <property type="term" value="P:translation"/>
    <property type="evidence" value="ECO:0000318"/>
    <property type="project" value="GO_Central"/>
</dbReference>
<dbReference type="CDD" id="cd06089">
    <property type="entry name" value="KOW_RPL26"/>
    <property type="match status" value="1"/>
</dbReference>
<dbReference type="FunFam" id="2.30.30.30:FF:000004">
    <property type="entry name" value="50S ribosomal protein L24"/>
    <property type="match status" value="1"/>
</dbReference>
<dbReference type="Gene3D" id="2.30.30.30">
    <property type="match status" value="1"/>
</dbReference>
<dbReference type="HAMAP" id="MF_01326_B">
    <property type="entry name" value="Ribosomal_uL24_B"/>
    <property type="match status" value="1"/>
</dbReference>
<dbReference type="InterPro" id="IPR005824">
    <property type="entry name" value="KOW"/>
</dbReference>
<dbReference type="InterPro" id="IPR014722">
    <property type="entry name" value="Rib_uL2_dom2"/>
</dbReference>
<dbReference type="InterPro" id="IPR003256">
    <property type="entry name" value="Ribosomal_uL24"/>
</dbReference>
<dbReference type="InterPro" id="IPR005825">
    <property type="entry name" value="Ribosomal_uL24_CS"/>
</dbReference>
<dbReference type="InterPro" id="IPR041988">
    <property type="entry name" value="Ribosomal_uL24_KOW"/>
</dbReference>
<dbReference type="InterPro" id="IPR008991">
    <property type="entry name" value="Translation_prot_SH3-like_sf"/>
</dbReference>
<dbReference type="NCBIfam" id="TIGR01079">
    <property type="entry name" value="rplX_bact"/>
    <property type="match status" value="1"/>
</dbReference>
<dbReference type="PANTHER" id="PTHR12903">
    <property type="entry name" value="MITOCHONDRIAL RIBOSOMAL PROTEIN L24"/>
    <property type="match status" value="1"/>
</dbReference>
<dbReference type="Pfam" id="PF00467">
    <property type="entry name" value="KOW"/>
    <property type="match status" value="1"/>
</dbReference>
<dbReference type="Pfam" id="PF17136">
    <property type="entry name" value="ribosomal_L24"/>
    <property type="match status" value="1"/>
</dbReference>
<dbReference type="SMART" id="SM00739">
    <property type="entry name" value="KOW"/>
    <property type="match status" value="1"/>
</dbReference>
<dbReference type="SUPFAM" id="SSF50104">
    <property type="entry name" value="Translation proteins SH3-like domain"/>
    <property type="match status" value="1"/>
</dbReference>
<dbReference type="PROSITE" id="PS01108">
    <property type="entry name" value="RIBOSOMAL_L24"/>
    <property type="match status" value="1"/>
</dbReference>
<gene>
    <name evidence="1" type="primary">rplX</name>
    <name type="ordered locus">Dtur_0992</name>
</gene>
<name>RL24_DICTD</name>
<feature type="chain" id="PRO_1000165942" description="Large ribosomal subunit protein uL24">
    <location>
        <begin position="1"/>
        <end position="105"/>
    </location>
</feature>
<keyword id="KW-1185">Reference proteome</keyword>
<keyword id="KW-0687">Ribonucleoprotein</keyword>
<keyword id="KW-0689">Ribosomal protein</keyword>
<keyword id="KW-0694">RNA-binding</keyword>
<keyword id="KW-0699">rRNA-binding</keyword>
<protein>
    <recommendedName>
        <fullName evidence="1">Large ribosomal subunit protein uL24</fullName>
    </recommendedName>
    <alternativeName>
        <fullName evidence="2">50S ribosomal protein L24</fullName>
    </alternativeName>
</protein>
<proteinExistence type="inferred from homology"/>
<comment type="function">
    <text evidence="1">One of two assembly initiator proteins, it binds directly to the 5'-end of the 23S rRNA, where it nucleates assembly of the 50S subunit.</text>
</comment>
<comment type="function">
    <text evidence="1">One of the proteins that surrounds the polypeptide exit tunnel on the outside of the subunit.</text>
</comment>
<comment type="subunit">
    <text evidence="1">Part of the 50S ribosomal subunit.</text>
</comment>
<comment type="similarity">
    <text evidence="1">Belongs to the universal ribosomal protein uL24 family.</text>
</comment>
<accession>B8E1E4</accession>
<sequence>MDIKKGDLVLVISGKDKGKRGRVISVLPSEEKVVVEGVNIVKKHTRPTAKMRQGGIIEKPAPLYRCKVMLICPHCNQPTRVKHTFLEDGRKVRVCSKCKEIIDRV</sequence>
<reference key="1">
    <citation type="journal article" date="2016" name="Front. Microbiol.">
        <title>The complete genome sequence of hyperthermophile Dictyoglomus turgidum DSM 6724 reveals a specialized carbohydrate fermentor.</title>
        <authorList>
            <person name="Brumm P.J."/>
            <person name="Gowda K."/>
            <person name="Robb F.T."/>
            <person name="Mead D.A."/>
        </authorList>
    </citation>
    <scope>NUCLEOTIDE SEQUENCE [LARGE SCALE GENOMIC DNA]</scope>
    <source>
        <strain>DSM 6724 / Z-1310</strain>
    </source>
</reference>
<organism>
    <name type="scientific">Dictyoglomus turgidum (strain DSM 6724 / Z-1310)</name>
    <dbReference type="NCBI Taxonomy" id="515635"/>
    <lineage>
        <taxon>Bacteria</taxon>
        <taxon>Pseudomonadati</taxon>
        <taxon>Dictyoglomota</taxon>
        <taxon>Dictyoglomia</taxon>
        <taxon>Dictyoglomales</taxon>
        <taxon>Dictyoglomaceae</taxon>
        <taxon>Dictyoglomus</taxon>
    </lineage>
</organism>